<keyword id="KW-0002">3D-structure</keyword>
<keyword id="KW-0903">Direct protein sequencing</keyword>
<keyword id="KW-0249">Electron transport</keyword>
<keyword id="KW-0349">Heme</keyword>
<keyword id="KW-0408">Iron</keyword>
<keyword id="KW-0472">Membrane</keyword>
<keyword id="KW-0479">Metal-binding</keyword>
<keyword id="KW-0602">Photosynthesis</keyword>
<keyword id="KW-0604">Photosystem II</keyword>
<keyword id="KW-1185">Reference proteome</keyword>
<keyword id="KW-0732">Signal</keyword>
<keyword id="KW-0793">Thylakoid</keyword>
<keyword id="KW-0813">Transport</keyword>
<comment type="function">
    <text evidence="1 4 5 7">One of the extrinsic, lumenal subunits of photosystem II (PSII). PSII is a light-driven water plastoquinone oxidoreductase, using light energy to abstract electrons from H(2)O, generating a proton gradient subsequently used for ATP formation. The extrinsic proteins stabilize the structure of photosystem II oxygen-evolving complex (OEC), the ion environment of oxygen evolution and protect the OEC against heat-induced inactivation. Low-potential cytochrome c that plays a role in the OEC of PSII, required for normal function or stabilization of PSII.</text>
</comment>
<comment type="cofactor">
    <cofactor evidence="1 2 3 6">
        <name>heme c</name>
        <dbReference type="ChEBI" id="CHEBI:61717"/>
    </cofactor>
    <text evidence="1 2 3 6">Binds 1 heme c group covalently per subunit.</text>
</comment>
<comment type="subunit">
    <text evidence="1 3 6">PSII is composed of 1 copy each of membrane proteins PsbA, PsbB, PsbC, PsbD, PsbE, PsbF, PsbH, PsbI, PsbJ, PsbK, PsbL, PsbM, PsbT, PsbX, PsbY, PsbZ, Psb30/Ycf12, peripheral proteins PsbO, CyanoQ (PsbQ), PsbU, PsbV and a large number of cofactors. It forms dimeric complexes (PubMed:34937700). The cyanobacterial oxygen-evolving complex is composed of PsbO, CyanoQ (PsbQ), PsbV and PsbU.</text>
</comment>
<comment type="subcellular location">
    <subcellularLocation>
        <location evidence="1 3 6">Cellular thylakoid membrane</location>
        <topology evidence="1 3 6">Peripheral membrane protein</topology>
        <orientation evidence="1 6 16">Lumenal side</orientation>
    </subcellularLocation>
    <text evidence="6 16">Associated with photosystem II at the lumenal side of the thylakoid membrane (PubMed:34937700). CyanoQ (PsbQ) binds to the large lumenal domain of PsbC (CP43) between PsbO and PsbV (PubMed:34937700).</text>
</comment>
<comment type="disruption phenotype">
    <text evidence="4 5 7">Cells show decreased but not abolished level of PSII and photoautotrophic growth (PubMed:7896839). Wild-type growth in BG11 medium, 30 degrees Celsius 30 umol photons/m(2)/s; dramatically reduced growth in Ca(2+) or Cl(-) deleted medium (PubMed:15258264). Slightly reduced growth at 30 degrees Celsius with 25 umol photons/m(2)/s, no growth in Ca(2+) or Cl(-) depleted conditions; no growth in a double psU-psbV mutant (PubMed:15641809).</text>
</comment>
<comment type="similarity">
    <text evidence="1">Belongs to the cytochrome c family. PsbV subfamily.</text>
</comment>
<comment type="sequence caution" evidence="15">
    <conflict type="erroneous initiation">
        <sequence resource="EMBL-CDS" id="AAA19982"/>
    </conflict>
    <text>Truncated N-terminus.</text>
</comment>
<reference key="1">
    <citation type="journal article" date="1995" name="J. Biol. Chem.">
        <title>The role of cytochrome c-550 as studied through reverse genetics and mutant characterization in Synechocystis sp. PCC 6803.</title>
        <authorList>
            <person name="Shen J.-R."/>
            <person name="Vermaas W."/>
            <person name="Inoue Y."/>
        </authorList>
    </citation>
    <scope>NUCLEOTIDE SEQUENCE [GENOMIC DNA]</scope>
    <scope>PROTEIN SEQUENCE OF 26-73</scope>
    <scope>PROBABLE SUBCELLULAR LOCATION</scope>
    <scope>DISRUPTION PHENOTYPE</scope>
</reference>
<reference key="2">
    <citation type="journal article" date="1996" name="DNA Res.">
        <title>Sequence analysis of the genome of the unicellular cyanobacterium Synechocystis sp. strain PCC6803. II. Sequence determination of the entire genome and assignment of potential protein-coding regions.</title>
        <authorList>
            <person name="Kaneko T."/>
            <person name="Sato S."/>
            <person name="Kotani H."/>
            <person name="Tanaka A."/>
            <person name="Asamizu E."/>
            <person name="Nakamura Y."/>
            <person name="Miyajima N."/>
            <person name="Hirosawa M."/>
            <person name="Sugiura M."/>
            <person name="Sasamoto S."/>
            <person name="Kimura T."/>
            <person name="Hosouchi T."/>
            <person name="Matsuno A."/>
            <person name="Muraki A."/>
            <person name="Nakazaki N."/>
            <person name="Naruo K."/>
            <person name="Okumura S."/>
            <person name="Shimpo S."/>
            <person name="Takeuchi C."/>
            <person name="Wada T."/>
            <person name="Watanabe A."/>
            <person name="Yamada M."/>
            <person name="Yasuda M."/>
            <person name="Tabata S."/>
        </authorList>
    </citation>
    <scope>NUCLEOTIDE SEQUENCE [LARGE SCALE GENOMIC DNA]</scope>
    <source>
        <strain>ATCC 27184 / PCC 6803 / Kazusa</strain>
    </source>
</reference>
<reference key="3">
    <citation type="journal article" date="1994" name="FEBS Lett.">
        <title>Cloning and sequence analysis of the gene encoding the low potential cytochrome c of Synechocystis PCC 6803.</title>
        <authorList>
            <person name="Kang C."/>
            <person name="Chitnis P.R."/>
            <person name="Smith S."/>
            <person name="Krogmann D.W."/>
        </authorList>
    </citation>
    <scope>NUCLEOTIDE SEQUENCE [GENOMIC DNA] OF 18-160</scope>
    <scope>PROTEIN SEQUENCE OF 26-49</scope>
</reference>
<reference key="4">
    <citation type="journal article" date="1997" name="Electrophoresis">
        <title>Towards a proteome project of cyanobacterium Synechocystis sp. strain PCC6803: linking 130 protein spots with their respective genes.</title>
        <authorList>
            <person name="Sazuka T."/>
            <person name="Ohara O."/>
        </authorList>
    </citation>
    <scope>PROTEIN SEQUENCE OF 26-40</scope>
</reference>
<reference key="5">
    <citation type="journal article" date="2002" name="Biochemistry">
        <title>Proteomic analysis of a highly active photosystem II preparation from the cyanobacterium Synechocystis sp. PCC 6803 reveals the presence of novel polypeptides.</title>
        <authorList>
            <person name="Kashino Y."/>
            <person name="Lauber W.M."/>
            <person name="Carroll J.A."/>
            <person name="Wang Q."/>
            <person name="Whitmarsh J."/>
            <person name="Satoh K."/>
            <person name="Pakrasi H.B."/>
        </authorList>
    </citation>
    <scope>PROTEIN SEQUENCE OF 26-39</scope>
    <scope>IDENTIFICATION BY MASS SPECTROMETRY</scope>
    <scope>COFACTOR</scope>
    <scope>SUBUNIT</scope>
    <scope>SUBCELLULAR LOCATION</scope>
    <source>
        <strain>ATCC 27184 / PCC 6803 / Kazusa</strain>
    </source>
</reference>
<reference key="6">
    <citation type="journal article" date="2004" name="Plant Cell">
        <title>Homologs of plant PsbP and PsbQ proteins are necessary for regulation of photosystem II activity in the cyanobacterium Synechocystis 6803.</title>
        <authorList>
            <person name="Thornton L.E."/>
            <person name="Ohkawa H."/>
            <person name="Roose J.L."/>
            <person name="Kashino Y."/>
            <person name="Keren N."/>
            <person name="Pakrasi H.B."/>
        </authorList>
    </citation>
    <scope>DISRUPTION PHENOTYPE</scope>
    <source>
        <strain>ATCC 27184 / PCC 6803 / Kazusa</strain>
    </source>
</reference>
<reference key="7">
    <citation type="journal article" date="2005" name="Biochemistry">
        <title>PsbQ (Sll1638) in Synechocystis sp. PCC 6803 is required for photosystem II activity in specific mutants and in nutrient-limiting conditions.</title>
        <authorList>
            <person name="Summerfield T.C."/>
            <person name="Shand J.A."/>
            <person name="Bentley F.K."/>
            <person name="Eaton-Rye J.J."/>
        </authorList>
    </citation>
    <scope>DISRUPTION PHENOTYPE</scope>
    <source>
        <strain>ATCC 27184 / PCC 6803 / Kazusa</strain>
    </source>
</reference>
<reference key="8">
    <citation type="journal article" date="2001" name="J. Biol. Inorg. Chem.">
        <title>Crystal structure of low-potential cytochrome c549 from Synechocystis sp. PCC 6803 at 1.21 A resolution.</title>
        <authorList>
            <person name="Frazao C."/>
            <person name="Enguita F.J."/>
            <person name="Coelho R."/>
            <person name="Sheldrick G.M."/>
            <person name="Navarro J.A."/>
            <person name="Hervas M."/>
            <person name="De la Rosa M.A."/>
            <person name="Carrondo M.A."/>
        </authorList>
    </citation>
    <scope>X-RAY CRYSTALLOGRAPHY (1.21 ANGSTROMS) OF 26-160 IN COMPLEX WITH HEME</scope>
    <scope>COFACTOR</scope>
</reference>
<reference evidence="18 19" key="9">
    <citation type="journal article" date="2022" name="Proc. Natl. Acad. Sci. U.S.A.">
        <title>High-resolution cryo-electron microscopy structure of photosystem II from the mesophilic cyanobacterium, Synechocystis sp. PCC 6803.</title>
        <authorList>
            <person name="Gisriel C.J."/>
            <person name="Wang J."/>
            <person name="Liu J."/>
            <person name="Flesher D.A."/>
            <person name="Reiss K.M."/>
            <person name="Huang H.L."/>
            <person name="Yang K.R."/>
            <person name="Armstrong W.H."/>
            <person name="Gunner M.R."/>
            <person name="Batista V.S."/>
            <person name="Debus R.J."/>
            <person name="Brudvig G.W."/>
        </authorList>
    </citation>
    <scope>STRUCTURE BY ELECTRON MICROSCOPY (1.93 ANGSTROMS) OF 26-160</scope>
    <scope>FUNCTION</scope>
    <scope>COFACTOR</scope>
    <scope>SUBUNIT</scope>
    <scope>SUBCELLULAR LOCATION</scope>
    <source>
        <strain>ATCC 27184 / PCC 6803 / Kazusa</strain>
    </source>
</reference>
<feature type="signal peptide" evidence="1 3 7 8 9">
    <location>
        <begin position="1"/>
        <end position="25"/>
    </location>
</feature>
<feature type="chain" id="PRO_0000006521" description="Photosystem II extrinsic protein V">
    <location>
        <begin position="26"/>
        <end position="160"/>
    </location>
</feature>
<feature type="binding site" description="covalent" evidence="2 6 17">
    <location>
        <position position="62"/>
    </location>
    <ligand>
        <name>heme c</name>
        <dbReference type="ChEBI" id="CHEBI:61717"/>
    </ligand>
</feature>
<feature type="binding site" description="covalent" evidence="2 6 17">
    <location>
        <position position="65"/>
    </location>
    <ligand>
        <name>heme c</name>
        <dbReference type="ChEBI" id="CHEBI:61717"/>
    </ligand>
</feature>
<feature type="binding site" description="axial binding residue" evidence="2 6 17">
    <location>
        <position position="66"/>
    </location>
    <ligand>
        <name>heme c</name>
        <dbReference type="ChEBI" id="CHEBI:61717"/>
    </ligand>
    <ligandPart>
        <name>Fe</name>
        <dbReference type="ChEBI" id="CHEBI:18248"/>
    </ligandPart>
</feature>
<feature type="binding site" description="axial binding residue" evidence="2 6 17">
    <location>
        <position position="117"/>
    </location>
    <ligand>
        <name>heme c</name>
        <dbReference type="ChEBI" id="CHEBI:61717"/>
    </ligand>
    <ligandPart>
        <name>Fe</name>
        <dbReference type="ChEBI" id="CHEBI:18248"/>
    </ligandPart>
</feature>
<feature type="sequence conflict" description="In Ref. 3; AAA19982." evidence="15" ref="3">
    <original>D</original>
    <variation>T</variation>
    <location>
        <position position="60"/>
    </location>
</feature>
<feature type="sequence conflict" description="In Ref. 1; AA sequence." evidence="15" ref="1">
    <location>
        <position position="71"/>
    </location>
</feature>
<feature type="sequence conflict" description="In Ref. 3; AAA19982." evidence="15" ref="3">
    <original>RR</original>
    <variation>PS</variation>
    <location>
        <begin position="90"/>
        <end position="91"/>
    </location>
</feature>
<feature type="sequence conflict" description="In Ref. 3; AAA19982." evidence="15" ref="3">
    <original>V</original>
    <variation>R</variation>
    <location>
        <position position="94"/>
    </location>
</feature>
<feature type="sequence conflict" description="In Ref. 3; AAA19982." evidence="15" ref="3">
    <original>FD</original>
    <variation>YN</variation>
    <location>
        <begin position="138"/>
        <end position="139"/>
    </location>
</feature>
<feature type="sequence conflict" description="In Ref. 3; AAA19982." evidence="15" ref="3">
    <original>G</original>
    <variation>A</variation>
    <location>
        <position position="142"/>
    </location>
</feature>
<feature type="turn" evidence="20">
    <location>
        <begin position="30"/>
        <end position="33"/>
    </location>
</feature>
<feature type="strand" evidence="20">
    <location>
        <begin position="34"/>
        <end position="41"/>
    </location>
</feature>
<feature type="strand" evidence="20">
    <location>
        <begin position="43"/>
        <end position="45"/>
    </location>
</feature>
<feature type="helix" evidence="20">
    <location>
        <begin position="48"/>
        <end position="61"/>
    </location>
</feature>
<feature type="helix" evidence="20">
    <location>
        <begin position="63"/>
        <end position="66"/>
    </location>
</feature>
<feature type="helix" evidence="20">
    <location>
        <begin position="67"/>
        <end position="69"/>
    </location>
</feature>
<feature type="strand" evidence="20">
    <location>
        <begin position="71"/>
        <end position="76"/>
    </location>
</feature>
<feature type="strand" evidence="20">
    <location>
        <begin position="78"/>
        <end position="80"/>
    </location>
</feature>
<feature type="helix" evidence="20">
    <location>
        <begin position="81"/>
        <end position="85"/>
    </location>
</feature>
<feature type="strand" evidence="20">
    <location>
        <begin position="87"/>
        <end position="89"/>
    </location>
</feature>
<feature type="helix" evidence="20">
    <location>
        <begin position="94"/>
        <end position="102"/>
    </location>
</feature>
<feature type="turn" evidence="20">
    <location>
        <begin position="114"/>
        <end position="116"/>
    </location>
</feature>
<feature type="turn" evidence="20">
    <location>
        <begin position="123"/>
        <end position="125"/>
    </location>
</feature>
<feature type="helix" evidence="20">
    <location>
        <begin position="127"/>
        <end position="129"/>
    </location>
</feature>
<feature type="helix" evidence="20">
    <location>
        <begin position="134"/>
        <end position="150"/>
    </location>
</feature>
<feature type="turn" evidence="21">
    <location>
        <begin position="152"/>
        <end position="155"/>
    </location>
</feature>
<dbReference type="EMBL" id="D45178">
    <property type="protein sequence ID" value="BAA08124.1"/>
    <property type="molecule type" value="Genomic_DNA"/>
</dbReference>
<dbReference type="EMBL" id="BA000022">
    <property type="protein sequence ID" value="BAA18512.1"/>
    <property type="molecule type" value="Genomic_DNA"/>
</dbReference>
<dbReference type="EMBL" id="U07021">
    <property type="protein sequence ID" value="AAA19982.2"/>
    <property type="status" value="ALT_INIT"/>
    <property type="molecule type" value="Genomic_DNA"/>
</dbReference>
<dbReference type="PIR" id="A56189">
    <property type="entry name" value="A56189"/>
</dbReference>
<dbReference type="PDB" id="1E29">
    <property type="method" value="X-ray"/>
    <property type="resolution" value="1.21 A"/>
    <property type="chains" value="A=26-160"/>
</dbReference>
<dbReference type="PDB" id="7N8O">
    <property type="method" value="EM"/>
    <property type="resolution" value="1.93 A"/>
    <property type="chains" value="V/v=26-160"/>
</dbReference>
<dbReference type="PDB" id="7RCV">
    <property type="method" value="EM"/>
    <property type="resolution" value="2.01 A"/>
    <property type="chains" value="V/v=26-160"/>
</dbReference>
<dbReference type="PDB" id="8TOW">
    <property type="method" value="EM"/>
    <property type="resolution" value="2.14 A"/>
    <property type="chains" value="V/v=1-160"/>
</dbReference>
<dbReference type="PDB" id="9EH5">
    <property type="method" value="EM"/>
    <property type="resolution" value="1.97 A"/>
    <property type="chains" value="V/v=1-160"/>
</dbReference>
<dbReference type="PDBsum" id="1E29"/>
<dbReference type="PDBsum" id="7N8O"/>
<dbReference type="PDBsum" id="7RCV"/>
<dbReference type="PDBsum" id="8TOW"/>
<dbReference type="PDBsum" id="9EH5"/>
<dbReference type="EMDB" id="EMD-24239"/>
<dbReference type="EMDB" id="EMD-24407"/>
<dbReference type="EMDB" id="EMD-41460"/>
<dbReference type="EMDB" id="EMD-48046"/>
<dbReference type="SMR" id="Q55013"/>
<dbReference type="IntAct" id="Q55013">
    <property type="interactions" value="1"/>
</dbReference>
<dbReference type="STRING" id="1148.gene:10499393"/>
<dbReference type="DrugBank" id="DB03317">
    <property type="generic name" value="Ferroheme C"/>
</dbReference>
<dbReference type="PaxDb" id="1148-1653599"/>
<dbReference type="EnsemblBacteria" id="BAA18512">
    <property type="protein sequence ID" value="BAA18512"/>
    <property type="gene ID" value="BAA18512"/>
</dbReference>
<dbReference type="KEGG" id="syn:sll0258"/>
<dbReference type="eggNOG" id="COG2010">
    <property type="taxonomic scope" value="Bacteria"/>
</dbReference>
<dbReference type="InParanoid" id="Q55013"/>
<dbReference type="BioCyc" id="MetaCyc:PSBV-MONOMER"/>
<dbReference type="EvolutionaryTrace" id="Q55013"/>
<dbReference type="Proteomes" id="UP000001425">
    <property type="component" value="Chromosome"/>
</dbReference>
<dbReference type="GO" id="GO:0031676">
    <property type="term" value="C:plasma membrane-derived thylakoid membrane"/>
    <property type="evidence" value="ECO:0007669"/>
    <property type="project" value="UniProtKB-SubCell"/>
</dbReference>
<dbReference type="GO" id="GO:0030096">
    <property type="term" value="C:plasma membrane-derived thylakoid photosystem II"/>
    <property type="evidence" value="ECO:0000314"/>
    <property type="project" value="UniProtKB"/>
</dbReference>
<dbReference type="GO" id="GO:0009055">
    <property type="term" value="F:electron transfer activity"/>
    <property type="evidence" value="ECO:0007669"/>
    <property type="project" value="InterPro"/>
</dbReference>
<dbReference type="GO" id="GO:0020037">
    <property type="term" value="F:heme binding"/>
    <property type="evidence" value="ECO:0007669"/>
    <property type="project" value="InterPro"/>
</dbReference>
<dbReference type="GO" id="GO:0005506">
    <property type="term" value="F:iron ion binding"/>
    <property type="evidence" value="ECO:0007669"/>
    <property type="project" value="InterPro"/>
</dbReference>
<dbReference type="GO" id="GO:0019684">
    <property type="term" value="P:photosynthesis, light reaction"/>
    <property type="evidence" value="ECO:0007669"/>
    <property type="project" value="UniProtKB-UniRule"/>
</dbReference>
<dbReference type="GO" id="GO:0022904">
    <property type="term" value="P:respiratory electron transport chain"/>
    <property type="evidence" value="ECO:0007669"/>
    <property type="project" value="InterPro"/>
</dbReference>
<dbReference type="Gene3D" id="1.10.760.10">
    <property type="entry name" value="Cytochrome c-like domain"/>
    <property type="match status" value="1"/>
</dbReference>
<dbReference type="HAMAP" id="MF_01378">
    <property type="entry name" value="PSII_Cyt550"/>
    <property type="match status" value="1"/>
</dbReference>
<dbReference type="InterPro" id="IPR009056">
    <property type="entry name" value="Cyt_c-like_dom"/>
</dbReference>
<dbReference type="InterPro" id="IPR036909">
    <property type="entry name" value="Cyt_c-like_dom_sf"/>
</dbReference>
<dbReference type="InterPro" id="IPR029490">
    <property type="entry name" value="Cytochrom_C550"/>
</dbReference>
<dbReference type="InterPro" id="IPR017851">
    <property type="entry name" value="PsbV_cyt_c550"/>
</dbReference>
<dbReference type="InterPro" id="IPR016003">
    <property type="entry name" value="PsbV_cyt_c550-like"/>
</dbReference>
<dbReference type="NCBIfam" id="TIGR03045">
    <property type="entry name" value="PS_II_C550"/>
    <property type="match status" value="1"/>
</dbReference>
<dbReference type="Pfam" id="PF14495">
    <property type="entry name" value="Cytochrom_C550"/>
    <property type="match status" value="1"/>
</dbReference>
<dbReference type="PIRSF" id="PIRSF005890">
    <property type="entry name" value="Phot_II_cyt_c550"/>
    <property type="match status" value="1"/>
</dbReference>
<dbReference type="SUPFAM" id="SSF46626">
    <property type="entry name" value="Cytochrome c"/>
    <property type="match status" value="1"/>
</dbReference>
<dbReference type="PROSITE" id="PS51007">
    <property type="entry name" value="CYTC"/>
    <property type="match status" value="1"/>
</dbReference>
<organism>
    <name type="scientific">Synechocystis sp. (strain ATCC 27184 / PCC 6803 / Kazusa)</name>
    <dbReference type="NCBI Taxonomy" id="1111708"/>
    <lineage>
        <taxon>Bacteria</taxon>
        <taxon>Bacillati</taxon>
        <taxon>Cyanobacteriota</taxon>
        <taxon>Cyanophyceae</taxon>
        <taxon>Synechococcales</taxon>
        <taxon>Merismopediaceae</taxon>
        <taxon>Synechocystis</taxon>
    </lineage>
</organism>
<sequence length="160" mass="17884">MKRFFLVAIASVLFFFNTMVGSANAVELTESTRTIPLDEAGGTTTLTARQFTNGQKIFVDTCTQCHLQGKTKTNNNVSLGLADLAGAEPRRDNVLALVEFLKNPKSYDGEDDYSELHPNISRPDIYPEMRNYTEDDIFDVAGYTLIAPKLDERWGGTIYF</sequence>
<accession>Q55013</accession>
<accession>Q55333</accession>
<proteinExistence type="evidence at protein level"/>
<name>CY550_SYNY3</name>
<protein>
    <recommendedName>
        <fullName evidence="1 11">Photosystem II extrinsic protein V</fullName>
        <shortName evidence="1 11">PsbV</shortName>
    </recommendedName>
    <alternativeName>
        <fullName evidence="1 12">Cytochrome c-550</fullName>
    </alternativeName>
    <alternativeName>
        <fullName evidence="10">Cytochrome c549</fullName>
    </alternativeName>
    <alternativeName>
        <fullName evidence="1">Cytochrome c550</fullName>
    </alternativeName>
    <alternativeName>
        <fullName evidence="1 14">Low-potential cytochrome c</fullName>
    </alternativeName>
</protein>
<evidence type="ECO:0000255" key="1">
    <source>
        <dbReference type="HAMAP-Rule" id="MF_01378"/>
    </source>
</evidence>
<evidence type="ECO:0000269" key="2">
    <source>
    </source>
</evidence>
<evidence type="ECO:0000269" key="3">
    <source>
    </source>
</evidence>
<evidence type="ECO:0000269" key="4">
    <source>
    </source>
</evidence>
<evidence type="ECO:0000269" key="5">
    <source>
    </source>
</evidence>
<evidence type="ECO:0000269" key="6">
    <source>
    </source>
</evidence>
<evidence type="ECO:0000269" key="7">
    <source>
    </source>
</evidence>
<evidence type="ECO:0000269" key="8">
    <source>
    </source>
</evidence>
<evidence type="ECO:0000269" key="9">
    <source>
    </source>
</evidence>
<evidence type="ECO:0000303" key="10">
    <source>
    </source>
</evidence>
<evidence type="ECO:0000303" key="11">
    <source>
    </source>
</evidence>
<evidence type="ECO:0000303" key="12">
    <source>
    </source>
</evidence>
<evidence type="ECO:0000303" key="13">
    <source>
    </source>
</evidence>
<evidence type="ECO:0000303" key="14">
    <source>
    </source>
</evidence>
<evidence type="ECO:0000305" key="15"/>
<evidence type="ECO:0000305" key="16">
    <source>
    </source>
</evidence>
<evidence type="ECO:0000312" key="17">
    <source>
        <dbReference type="PDB" id="7N8O"/>
    </source>
</evidence>
<evidence type="ECO:0007744" key="18">
    <source>
        <dbReference type="PDB" id="7N8O"/>
    </source>
</evidence>
<evidence type="ECO:0007744" key="19">
    <source>
        <dbReference type="PDB" id="7RCV"/>
    </source>
</evidence>
<evidence type="ECO:0007829" key="20">
    <source>
        <dbReference type="PDB" id="1E29"/>
    </source>
</evidence>
<evidence type="ECO:0007829" key="21">
    <source>
        <dbReference type="PDB" id="7N8O"/>
    </source>
</evidence>
<gene>
    <name evidence="1 12" type="primary">psbV</name>
    <name evidence="13" type="synonym">petK</name>
    <name type="ordered locus">sll0258</name>
</gene>